<sequence>MQLTAVGLNHQTAPLSIREKLAFAAACLPEAVRNLARSNAATEAVILSTCNRTELYCVGDSEEIIRWLADYHSLPIEEISPYLYTLGMQETVRHAFRVACGLDSMVLGEPQILGQIKDAVRVAQEQESMGKKLNALFQKTFSVAKEVRTDTAVGENSVSMASASVKLAEQIFPDIGDLNVLFIGAGEMIELVATYFAAKSPRLMTVANRTLARAQELCDKLGVNAEPCLLSDLPAILHEYDVVVSSTASQLPIVGKGMVERALKQRQSMPLFMLDLAVPRDIEAEVGDLNDAYLYTVDDMVNIVQSGKEARQKAAAAAETLVSEKVAEFVRQQQGRQSVPLIRALRDEGEKARKQVLENAMKQLAKGATAEEVLERLSIQLTNKLLHSPTQTLNKAGEEDKDLVHAVAQIYHLDK</sequence>
<protein>
    <recommendedName>
        <fullName evidence="1">Glutamyl-tRNA reductase</fullName>
        <shortName evidence="1">GluTR</shortName>
        <ecNumber evidence="1">1.2.1.70</ecNumber>
    </recommendedName>
</protein>
<organism>
    <name type="scientific">Neisseria meningitidis serogroup C</name>
    <dbReference type="NCBI Taxonomy" id="135720"/>
    <lineage>
        <taxon>Bacteria</taxon>
        <taxon>Pseudomonadati</taxon>
        <taxon>Pseudomonadota</taxon>
        <taxon>Betaproteobacteria</taxon>
        <taxon>Neisseriales</taxon>
        <taxon>Neisseriaceae</taxon>
        <taxon>Neisseria</taxon>
    </lineage>
</organism>
<evidence type="ECO:0000255" key="1">
    <source>
        <dbReference type="HAMAP-Rule" id="MF_00087"/>
    </source>
</evidence>
<proteinExistence type="inferred from homology"/>
<keyword id="KW-0521">NADP</keyword>
<keyword id="KW-0560">Oxidoreductase</keyword>
<keyword id="KW-0627">Porphyrin biosynthesis</keyword>
<gene>
    <name evidence="1" type="primary">hemA</name>
</gene>
<accession>P0A0T8</accession>
<accession>Q9ZHD5</accession>
<feature type="chain" id="PRO_0000114047" description="Glutamyl-tRNA reductase">
    <location>
        <begin position="1"/>
        <end position="415"/>
    </location>
</feature>
<feature type="active site" description="Nucleophile" evidence="1">
    <location>
        <position position="50"/>
    </location>
</feature>
<feature type="binding site" evidence="1">
    <location>
        <begin position="49"/>
        <end position="52"/>
    </location>
    <ligand>
        <name>substrate</name>
    </ligand>
</feature>
<feature type="binding site" evidence="1">
    <location>
        <position position="104"/>
    </location>
    <ligand>
        <name>substrate</name>
    </ligand>
</feature>
<feature type="binding site" evidence="1">
    <location>
        <begin position="109"/>
        <end position="111"/>
    </location>
    <ligand>
        <name>substrate</name>
    </ligand>
</feature>
<feature type="binding site" evidence="1">
    <location>
        <position position="115"/>
    </location>
    <ligand>
        <name>substrate</name>
    </ligand>
</feature>
<feature type="binding site" evidence="1">
    <location>
        <begin position="184"/>
        <end position="189"/>
    </location>
    <ligand>
        <name>NADP(+)</name>
        <dbReference type="ChEBI" id="CHEBI:58349"/>
    </ligand>
</feature>
<feature type="site" description="Important for activity" evidence="1">
    <location>
        <position position="94"/>
    </location>
</feature>
<comment type="function">
    <text evidence="1">Catalyzes the NADPH-dependent reduction of glutamyl-tRNA(Glu) to glutamate 1-semialdehyde (GSA).</text>
</comment>
<comment type="catalytic activity">
    <reaction evidence="1">
        <text>(S)-4-amino-5-oxopentanoate + tRNA(Glu) + NADP(+) = L-glutamyl-tRNA(Glu) + NADPH + H(+)</text>
        <dbReference type="Rhea" id="RHEA:12344"/>
        <dbReference type="Rhea" id="RHEA-COMP:9663"/>
        <dbReference type="Rhea" id="RHEA-COMP:9680"/>
        <dbReference type="ChEBI" id="CHEBI:15378"/>
        <dbReference type="ChEBI" id="CHEBI:57501"/>
        <dbReference type="ChEBI" id="CHEBI:57783"/>
        <dbReference type="ChEBI" id="CHEBI:58349"/>
        <dbReference type="ChEBI" id="CHEBI:78442"/>
        <dbReference type="ChEBI" id="CHEBI:78520"/>
        <dbReference type="EC" id="1.2.1.70"/>
    </reaction>
</comment>
<comment type="pathway">
    <text evidence="1">Porphyrin-containing compound metabolism; protoporphyrin-IX biosynthesis; 5-aminolevulinate from L-glutamyl-tRNA(Glu): step 1/2.</text>
</comment>
<comment type="subunit">
    <text evidence="1">Homodimer.</text>
</comment>
<comment type="domain">
    <text evidence="1">Possesses an unusual extended V-shaped dimeric structure with each monomer consisting of three distinct domains arranged along a curved 'spinal' alpha-helix. The N-terminal catalytic domain specifically recognizes the glutamate moiety of the substrate. The second domain is the NADPH-binding domain, and the third C-terminal domain is responsible for dimerization.</text>
</comment>
<comment type="miscellaneous">
    <text evidence="1">During catalysis, the active site Cys acts as a nucleophile attacking the alpha-carbonyl group of tRNA-bound glutamate with the formation of a thioester intermediate between enzyme and glutamate, and the concomitant release of tRNA(Glu). The thioester intermediate is finally reduced by direct hydride transfer from NADPH, to form the product GSA.</text>
</comment>
<comment type="similarity">
    <text evidence="1">Belongs to the glutamyl-tRNA reductase family.</text>
</comment>
<reference key="1">
    <citation type="journal article" date="1998" name="J. Bacteriol.">
        <title>Transport of intact porphyrin by HpuAB, the hemoglobin-haptoglobin utilization system of Neisseria meningitidis.</title>
        <authorList>
            <person name="Lewis L.A."/>
            <person name="Sung M."/>
            <person name="Gipson M."/>
            <person name="Hartman K."/>
            <person name="Dyer D.W."/>
        </authorList>
    </citation>
    <scope>NUCLEOTIDE SEQUENCE [GENOMIC DNA]</scope>
    <source>
        <strain>DNM2 / Serogroup C / Serotype 2a</strain>
    </source>
</reference>
<dbReference type="EC" id="1.2.1.70" evidence="1"/>
<dbReference type="EMBL" id="AF067427">
    <property type="protein sequence ID" value="AAC79429.1"/>
    <property type="molecule type" value="Genomic_DNA"/>
</dbReference>
<dbReference type="SMR" id="P0A0T8"/>
<dbReference type="GeneID" id="93386609"/>
<dbReference type="OMA" id="FAFKCAA"/>
<dbReference type="UniPathway" id="UPA00251">
    <property type="reaction ID" value="UER00316"/>
</dbReference>
<dbReference type="GO" id="GO:0008883">
    <property type="term" value="F:glutamyl-tRNA reductase activity"/>
    <property type="evidence" value="ECO:0007669"/>
    <property type="project" value="UniProtKB-UniRule"/>
</dbReference>
<dbReference type="GO" id="GO:0050661">
    <property type="term" value="F:NADP binding"/>
    <property type="evidence" value="ECO:0007669"/>
    <property type="project" value="InterPro"/>
</dbReference>
<dbReference type="GO" id="GO:0019353">
    <property type="term" value="P:protoporphyrinogen IX biosynthetic process from glutamate"/>
    <property type="evidence" value="ECO:0007669"/>
    <property type="project" value="TreeGrafter"/>
</dbReference>
<dbReference type="CDD" id="cd05213">
    <property type="entry name" value="NAD_bind_Glutamyl_tRNA_reduct"/>
    <property type="match status" value="1"/>
</dbReference>
<dbReference type="FunFam" id="3.30.460.30:FF:000001">
    <property type="entry name" value="Glutamyl-tRNA reductase"/>
    <property type="match status" value="1"/>
</dbReference>
<dbReference type="FunFam" id="3.40.50.720:FF:000031">
    <property type="entry name" value="Glutamyl-tRNA reductase"/>
    <property type="match status" value="1"/>
</dbReference>
<dbReference type="Gene3D" id="3.30.460.30">
    <property type="entry name" value="Glutamyl-tRNA reductase, N-terminal domain"/>
    <property type="match status" value="1"/>
</dbReference>
<dbReference type="Gene3D" id="3.40.50.720">
    <property type="entry name" value="NAD(P)-binding Rossmann-like Domain"/>
    <property type="match status" value="1"/>
</dbReference>
<dbReference type="HAMAP" id="MF_00087">
    <property type="entry name" value="Glu_tRNA_reductase"/>
    <property type="match status" value="1"/>
</dbReference>
<dbReference type="InterPro" id="IPR000343">
    <property type="entry name" value="4pyrrol_synth_GluRdtase"/>
</dbReference>
<dbReference type="InterPro" id="IPR015896">
    <property type="entry name" value="4pyrrol_synth_GluRdtase_dimer"/>
</dbReference>
<dbReference type="InterPro" id="IPR015895">
    <property type="entry name" value="4pyrrol_synth_GluRdtase_N"/>
</dbReference>
<dbReference type="InterPro" id="IPR018214">
    <property type="entry name" value="GluRdtase_CS"/>
</dbReference>
<dbReference type="InterPro" id="IPR036453">
    <property type="entry name" value="GluRdtase_dimer_dom_sf"/>
</dbReference>
<dbReference type="InterPro" id="IPR036343">
    <property type="entry name" value="GluRdtase_N_sf"/>
</dbReference>
<dbReference type="InterPro" id="IPR036291">
    <property type="entry name" value="NAD(P)-bd_dom_sf"/>
</dbReference>
<dbReference type="InterPro" id="IPR006151">
    <property type="entry name" value="Shikm_DH/Glu-tRNA_Rdtase"/>
</dbReference>
<dbReference type="NCBIfam" id="TIGR01035">
    <property type="entry name" value="hemA"/>
    <property type="match status" value="1"/>
</dbReference>
<dbReference type="PANTHER" id="PTHR43013">
    <property type="entry name" value="GLUTAMYL-TRNA REDUCTASE"/>
    <property type="match status" value="1"/>
</dbReference>
<dbReference type="PANTHER" id="PTHR43013:SF1">
    <property type="entry name" value="GLUTAMYL-TRNA REDUCTASE"/>
    <property type="match status" value="1"/>
</dbReference>
<dbReference type="Pfam" id="PF00745">
    <property type="entry name" value="GlutR_dimer"/>
    <property type="match status" value="1"/>
</dbReference>
<dbReference type="Pfam" id="PF05201">
    <property type="entry name" value="GlutR_N"/>
    <property type="match status" value="1"/>
</dbReference>
<dbReference type="Pfam" id="PF01488">
    <property type="entry name" value="Shikimate_DH"/>
    <property type="match status" value="1"/>
</dbReference>
<dbReference type="PIRSF" id="PIRSF000445">
    <property type="entry name" value="4pyrrol_synth_GluRdtase"/>
    <property type="match status" value="1"/>
</dbReference>
<dbReference type="SUPFAM" id="SSF69742">
    <property type="entry name" value="Glutamyl tRNA-reductase catalytic, N-terminal domain"/>
    <property type="match status" value="1"/>
</dbReference>
<dbReference type="SUPFAM" id="SSF69075">
    <property type="entry name" value="Glutamyl tRNA-reductase dimerization domain"/>
    <property type="match status" value="1"/>
</dbReference>
<dbReference type="SUPFAM" id="SSF51735">
    <property type="entry name" value="NAD(P)-binding Rossmann-fold domains"/>
    <property type="match status" value="1"/>
</dbReference>
<dbReference type="PROSITE" id="PS00747">
    <property type="entry name" value="GLUTR"/>
    <property type="match status" value="1"/>
</dbReference>
<name>HEM1_NEIMC</name>